<keyword id="KW-0342">GTP-binding</keyword>
<keyword id="KW-0547">Nucleotide-binding</keyword>
<keyword id="KW-1185">Reference proteome</keyword>
<gene>
    <name type="primary">drg2</name>
    <name type="ORF">DDB_G0279451</name>
</gene>
<reference key="1">
    <citation type="journal article" date="2005" name="Nature">
        <title>The genome of the social amoeba Dictyostelium discoideum.</title>
        <authorList>
            <person name="Eichinger L."/>
            <person name="Pachebat J.A."/>
            <person name="Gloeckner G."/>
            <person name="Rajandream M.A."/>
            <person name="Sucgang R."/>
            <person name="Berriman M."/>
            <person name="Song J."/>
            <person name="Olsen R."/>
            <person name="Szafranski K."/>
            <person name="Xu Q."/>
            <person name="Tunggal B."/>
            <person name="Kummerfeld S."/>
            <person name="Madera M."/>
            <person name="Konfortov B.A."/>
            <person name="Rivero F."/>
            <person name="Bankier A.T."/>
            <person name="Lehmann R."/>
            <person name="Hamlin N."/>
            <person name="Davies R."/>
            <person name="Gaudet P."/>
            <person name="Fey P."/>
            <person name="Pilcher K."/>
            <person name="Chen G."/>
            <person name="Saunders D."/>
            <person name="Sodergren E.J."/>
            <person name="Davis P."/>
            <person name="Kerhornou A."/>
            <person name="Nie X."/>
            <person name="Hall N."/>
            <person name="Anjard C."/>
            <person name="Hemphill L."/>
            <person name="Bason N."/>
            <person name="Farbrother P."/>
            <person name="Desany B."/>
            <person name="Just E."/>
            <person name="Morio T."/>
            <person name="Rost R."/>
            <person name="Churcher C.M."/>
            <person name="Cooper J."/>
            <person name="Haydock S."/>
            <person name="van Driessche N."/>
            <person name="Cronin A."/>
            <person name="Goodhead I."/>
            <person name="Muzny D.M."/>
            <person name="Mourier T."/>
            <person name="Pain A."/>
            <person name="Lu M."/>
            <person name="Harper D."/>
            <person name="Lindsay R."/>
            <person name="Hauser H."/>
            <person name="James K.D."/>
            <person name="Quiles M."/>
            <person name="Madan Babu M."/>
            <person name="Saito T."/>
            <person name="Buchrieser C."/>
            <person name="Wardroper A."/>
            <person name="Felder M."/>
            <person name="Thangavelu M."/>
            <person name="Johnson D."/>
            <person name="Knights A."/>
            <person name="Loulseged H."/>
            <person name="Mungall K.L."/>
            <person name="Oliver K."/>
            <person name="Price C."/>
            <person name="Quail M.A."/>
            <person name="Urushihara H."/>
            <person name="Hernandez J."/>
            <person name="Rabbinowitsch E."/>
            <person name="Steffen D."/>
            <person name="Sanders M."/>
            <person name="Ma J."/>
            <person name="Kohara Y."/>
            <person name="Sharp S."/>
            <person name="Simmonds M.N."/>
            <person name="Spiegler S."/>
            <person name="Tivey A."/>
            <person name="Sugano S."/>
            <person name="White B."/>
            <person name="Walker D."/>
            <person name="Woodward J.R."/>
            <person name="Winckler T."/>
            <person name="Tanaka Y."/>
            <person name="Shaulsky G."/>
            <person name="Schleicher M."/>
            <person name="Weinstock G.M."/>
            <person name="Rosenthal A."/>
            <person name="Cox E.C."/>
            <person name="Chisholm R.L."/>
            <person name="Gibbs R.A."/>
            <person name="Loomis W.F."/>
            <person name="Platzer M."/>
            <person name="Kay R.R."/>
            <person name="Williams J.G."/>
            <person name="Dear P.H."/>
            <person name="Noegel A.A."/>
            <person name="Barrell B.G."/>
            <person name="Kuspa A."/>
        </authorList>
    </citation>
    <scope>NUCLEOTIDE SEQUENCE [LARGE SCALE GENOMIC DNA]</scope>
    <source>
        <strain>AX4</strain>
    </source>
</reference>
<name>DRG2_DICDI</name>
<dbReference type="EMBL" id="AAFI02000031">
    <property type="protein sequence ID" value="EAL67664.1"/>
    <property type="molecule type" value="Genomic_DNA"/>
</dbReference>
<dbReference type="RefSeq" id="XP_641633.1">
    <property type="nucleotide sequence ID" value="XM_636541.1"/>
</dbReference>
<dbReference type="SMR" id="Q54WT4"/>
<dbReference type="FunCoup" id="Q54WT4">
    <property type="interactions" value="1209"/>
</dbReference>
<dbReference type="STRING" id="44689.Q54WT4"/>
<dbReference type="PaxDb" id="44689-DDB0205772"/>
<dbReference type="EnsemblProtists" id="EAL67664">
    <property type="protein sequence ID" value="EAL67664"/>
    <property type="gene ID" value="DDB_G0279451"/>
</dbReference>
<dbReference type="GeneID" id="8622039"/>
<dbReference type="KEGG" id="ddi:DDB_G0279451"/>
<dbReference type="dictyBase" id="DDB_G0279451">
    <property type="gene designation" value="drg2"/>
</dbReference>
<dbReference type="VEuPathDB" id="AmoebaDB:DDB_G0279451"/>
<dbReference type="eggNOG" id="KOG1486">
    <property type="taxonomic scope" value="Eukaryota"/>
</dbReference>
<dbReference type="HOGENOM" id="CLU_044997_0_0_1"/>
<dbReference type="InParanoid" id="Q54WT4"/>
<dbReference type="OMA" id="DVCDQVH"/>
<dbReference type="PhylomeDB" id="Q54WT4"/>
<dbReference type="Reactome" id="R-DDI-9629569">
    <property type="pathway name" value="Protein hydroxylation"/>
</dbReference>
<dbReference type="PRO" id="PR:Q54WT4"/>
<dbReference type="Proteomes" id="UP000002195">
    <property type="component" value="Chromosome 3"/>
</dbReference>
<dbReference type="GO" id="GO:0005737">
    <property type="term" value="C:cytoplasm"/>
    <property type="evidence" value="ECO:0000318"/>
    <property type="project" value="GO_Central"/>
</dbReference>
<dbReference type="GO" id="GO:0005525">
    <property type="term" value="F:GTP binding"/>
    <property type="evidence" value="ECO:0000318"/>
    <property type="project" value="GO_Central"/>
</dbReference>
<dbReference type="GO" id="GO:0003924">
    <property type="term" value="F:GTPase activity"/>
    <property type="evidence" value="ECO:0007669"/>
    <property type="project" value="InterPro"/>
</dbReference>
<dbReference type="GO" id="GO:0002181">
    <property type="term" value="P:cytoplasmic translation"/>
    <property type="evidence" value="ECO:0000318"/>
    <property type="project" value="GO_Central"/>
</dbReference>
<dbReference type="CDD" id="cd01896">
    <property type="entry name" value="DRG"/>
    <property type="match status" value="1"/>
</dbReference>
<dbReference type="CDD" id="cd17231">
    <property type="entry name" value="TGS_DRG2"/>
    <property type="match status" value="1"/>
</dbReference>
<dbReference type="FunFam" id="3.10.20.30:FF:000003">
    <property type="entry name" value="Developmentally-regulated GTP-binding protein 1"/>
    <property type="match status" value="1"/>
</dbReference>
<dbReference type="FunFam" id="3.40.50.300:FF:000740">
    <property type="entry name" value="Putative GTP-binding protein 1"/>
    <property type="match status" value="1"/>
</dbReference>
<dbReference type="Gene3D" id="3.10.20.30">
    <property type="match status" value="1"/>
</dbReference>
<dbReference type="Gene3D" id="6.10.140.1070">
    <property type="match status" value="2"/>
</dbReference>
<dbReference type="InterPro" id="IPR012675">
    <property type="entry name" value="Beta-grasp_dom_sf"/>
</dbReference>
<dbReference type="InterPro" id="IPR045001">
    <property type="entry name" value="DRG"/>
</dbReference>
<dbReference type="InterPro" id="IPR031167">
    <property type="entry name" value="G_OBG"/>
</dbReference>
<dbReference type="InterPro" id="IPR006073">
    <property type="entry name" value="GTP-bd"/>
</dbReference>
<dbReference type="InterPro" id="IPR031662">
    <property type="entry name" value="GTP-binding_2"/>
</dbReference>
<dbReference type="InterPro" id="IPR027417">
    <property type="entry name" value="P-loop_NTPase"/>
</dbReference>
<dbReference type="InterPro" id="IPR005225">
    <property type="entry name" value="Small_GTP-bd"/>
</dbReference>
<dbReference type="InterPro" id="IPR004095">
    <property type="entry name" value="TGS"/>
</dbReference>
<dbReference type="InterPro" id="IPR012676">
    <property type="entry name" value="TGS-like"/>
</dbReference>
<dbReference type="NCBIfam" id="TIGR00231">
    <property type="entry name" value="small_GTP"/>
    <property type="match status" value="1"/>
</dbReference>
<dbReference type="PANTHER" id="PTHR43127">
    <property type="entry name" value="DEVELOPMENTALLY-REGULATED GTP-BINDING PROTEIN 2"/>
    <property type="match status" value="1"/>
</dbReference>
<dbReference type="Pfam" id="PF01926">
    <property type="entry name" value="MMR_HSR1"/>
    <property type="match status" value="1"/>
</dbReference>
<dbReference type="Pfam" id="PF16897">
    <property type="entry name" value="MMR_HSR1_Xtn"/>
    <property type="match status" value="1"/>
</dbReference>
<dbReference type="Pfam" id="PF02824">
    <property type="entry name" value="TGS"/>
    <property type="match status" value="1"/>
</dbReference>
<dbReference type="PRINTS" id="PR00326">
    <property type="entry name" value="GTP1OBG"/>
</dbReference>
<dbReference type="SUPFAM" id="SSF52540">
    <property type="entry name" value="P-loop containing nucleoside triphosphate hydrolases"/>
    <property type="match status" value="1"/>
</dbReference>
<dbReference type="SUPFAM" id="SSF81271">
    <property type="entry name" value="TGS-like"/>
    <property type="match status" value="1"/>
</dbReference>
<dbReference type="PROSITE" id="PS51710">
    <property type="entry name" value="G_OBG"/>
    <property type="match status" value="1"/>
</dbReference>
<dbReference type="PROSITE" id="PS51880">
    <property type="entry name" value="TGS"/>
    <property type="match status" value="1"/>
</dbReference>
<evidence type="ECO:0000255" key="1">
    <source>
        <dbReference type="PROSITE-ProRule" id="PRU01047"/>
    </source>
</evidence>
<evidence type="ECO:0000255" key="2">
    <source>
        <dbReference type="PROSITE-ProRule" id="PRU01228"/>
    </source>
</evidence>
<proteinExistence type="inferred from homology"/>
<organism>
    <name type="scientific">Dictyostelium discoideum</name>
    <name type="common">Social amoeba</name>
    <dbReference type="NCBI Taxonomy" id="44689"/>
    <lineage>
        <taxon>Eukaryota</taxon>
        <taxon>Amoebozoa</taxon>
        <taxon>Evosea</taxon>
        <taxon>Eumycetozoa</taxon>
        <taxon>Dictyostelia</taxon>
        <taxon>Dictyosteliales</taxon>
        <taxon>Dictyosteliaceae</taxon>
        <taxon>Dictyostelium</taxon>
    </lineage>
</organism>
<comment type="similarity">
    <text evidence="1">Belongs to the TRAFAC class OBG-HflX-like GTPase superfamily. OBG GTPase family.</text>
</comment>
<protein>
    <recommendedName>
        <fullName>Developmentally-regulated GTP-binding protein 2 homolog</fullName>
        <shortName>DRG-2</shortName>
    </recommendedName>
</protein>
<sequence>MGILEKIKDIEAEMSRTQKNKATEYHLGLLKAKLARLRQQLLDPPKSSGKGGDGFEVLKSGDARVALIGFPSVGKSTILTKLTETKSLAAAYEFTTLTCIPGVIQHKGARIQLLDTPGIIEGASQGRGRGRQVIAVARTADLILMMLDANKGEIQKRLLQEELESIGIRLNSQPPNIYFKLKSAGGVNLTATQTLTKITEKLAKSILHEYKIFNCDLVIRCDPTVDELIDAIEGRRSYIRCLYVYNKMDHMSMEDVDRLSRQPNSVVISCNMNLNLDFLLDKIWDYLNLVRVYTKLRGASPDFNDAIILREGATMEDICRFLHKELVSQFKYGIVWGVSAKHCPQRVGISHALEDEDVIQIVKK</sequence>
<feature type="chain" id="PRO_0000351221" description="Developmentally-regulated GTP-binding protein 2 homolog">
    <location>
        <begin position="1"/>
        <end position="364"/>
    </location>
</feature>
<feature type="domain" description="OBG-type G" evidence="1">
    <location>
        <begin position="63"/>
        <end position="288"/>
    </location>
</feature>
<feature type="domain" description="TGS" evidence="2">
    <location>
        <begin position="288"/>
        <end position="363"/>
    </location>
</feature>
<feature type="binding site" evidence="1">
    <location>
        <begin position="69"/>
        <end position="76"/>
    </location>
    <ligand>
        <name>GTP</name>
        <dbReference type="ChEBI" id="CHEBI:37565"/>
    </ligand>
</feature>
<feature type="binding site" evidence="1">
    <location>
        <begin position="115"/>
        <end position="119"/>
    </location>
    <ligand>
        <name>GTP</name>
        <dbReference type="ChEBI" id="CHEBI:37565"/>
    </ligand>
</feature>
<feature type="binding site" evidence="1">
    <location>
        <begin position="246"/>
        <end position="249"/>
    </location>
    <ligand>
        <name>GTP</name>
        <dbReference type="ChEBI" id="CHEBI:37565"/>
    </ligand>
</feature>
<accession>Q54WT4</accession>